<protein>
    <recommendedName>
        <fullName>Variant surface glycoprotein ILTAT 1.3</fullName>
        <shortName>VSG</shortName>
    </recommendedName>
</protein>
<reference key="1">
    <citation type="journal article" date="1981" name="Nature">
        <title>Sequence homologies near the C-termini of the variable surface glycoproteins of Trypanosoma brucei.</title>
        <authorList>
            <person name="Rice-Ficht A.C."/>
            <person name="Chen K.K."/>
            <person name="Donelson J.E."/>
        </authorList>
    </citation>
    <scope>NUCLEOTIDE SEQUENCE [MRNA]</scope>
</reference>
<keyword id="KW-1003">Cell membrane</keyword>
<keyword id="KW-1015">Disulfide bond</keyword>
<keyword id="KW-0325">Glycoprotein</keyword>
<keyword id="KW-0336">GPI-anchor</keyword>
<keyword id="KW-0449">Lipoprotein</keyword>
<keyword id="KW-0472">Membrane</keyword>
<keyword id="KW-0732">Signal</keyword>
<keyword id="KW-0821">Trypanosomiasis</keyword>
<evidence type="ECO:0000250" key="1"/>
<evidence type="ECO:0000255" key="2"/>
<organism>
    <name type="scientific">Trypanosoma brucei brucei</name>
    <dbReference type="NCBI Taxonomy" id="5702"/>
    <lineage>
        <taxon>Eukaryota</taxon>
        <taxon>Discoba</taxon>
        <taxon>Euglenozoa</taxon>
        <taxon>Kinetoplastea</taxon>
        <taxon>Metakinetoplastina</taxon>
        <taxon>Trypanosomatida</taxon>
        <taxon>Trypanosomatidae</taxon>
        <taxon>Trypanosoma</taxon>
    </lineage>
</organism>
<proteinExistence type="evidence at transcript level"/>
<dbReference type="EMBL" id="J01221">
    <property type="protein sequence ID" value="AAA30288.1"/>
    <property type="molecule type" value="mRNA"/>
</dbReference>
<dbReference type="PIR" id="S09640">
    <property type="entry name" value="S09640"/>
</dbReference>
<dbReference type="SMR" id="P06014"/>
<dbReference type="GO" id="GO:0005886">
    <property type="term" value="C:plasma membrane"/>
    <property type="evidence" value="ECO:0007669"/>
    <property type="project" value="UniProtKB-SubCell"/>
</dbReference>
<dbReference type="GO" id="GO:0098552">
    <property type="term" value="C:side of membrane"/>
    <property type="evidence" value="ECO:0007669"/>
    <property type="project" value="UniProtKB-KW"/>
</dbReference>
<dbReference type="GO" id="GO:0042783">
    <property type="term" value="P:symbiont-mediated evasion of host immune response"/>
    <property type="evidence" value="ECO:0007669"/>
    <property type="project" value="InterPro"/>
</dbReference>
<dbReference type="FunFam" id="3.30.1680.40:FF:000001">
    <property type="entry name" value="Variant surface glycoprotein (VSG, atypical), putative"/>
    <property type="match status" value="1"/>
</dbReference>
<dbReference type="Gene3D" id="3.30.1680.30">
    <property type="match status" value="1"/>
</dbReference>
<dbReference type="Gene3D" id="3.30.1680.40">
    <property type="match status" value="1"/>
</dbReference>
<dbReference type="Gene3D" id="3.90.150.10">
    <property type="entry name" value="Variant Surface Glycoprotein, subunit A domain 1"/>
    <property type="match status" value="1"/>
</dbReference>
<dbReference type="Gene3D" id="1.10.470.10">
    <property type="entry name" value="Variant Surface Glycoprotein, subunit A, domain 2"/>
    <property type="match status" value="1"/>
</dbReference>
<dbReference type="InterPro" id="IPR001812">
    <property type="entry name" value="Trypano_VSG_A_N_dom"/>
</dbReference>
<dbReference type="InterPro" id="IPR019609">
    <property type="entry name" value="Variant_surf_glycoprt_trypan_C"/>
</dbReference>
<dbReference type="Pfam" id="PF00913">
    <property type="entry name" value="Trypan_glycop"/>
    <property type="match status" value="1"/>
</dbReference>
<dbReference type="Pfam" id="PF10659">
    <property type="entry name" value="Trypan_glycop_C"/>
    <property type="match status" value="1"/>
</dbReference>
<dbReference type="SUPFAM" id="SSF58087">
    <property type="entry name" value="Variant surface glycoprotein (N-terminal domain)"/>
    <property type="match status" value="1"/>
</dbReference>
<sequence>MTKAYENRMLLQALVLAAVLCTTHAEGTAKAPLKHSVATGFCSFSKAAKQAANKLAQTLDAVKATLNQNRKAHLQNLLVAVKRPTEQIAALILGQYANTQAASGLSDLGKWAPDETKTIGQALYTSGRLDGFIDVLDGHRSENSGQNKNCIANDGDGTTKAFDFDALCGPTEVAKAGNEPGDLKSSDRNGFWWHRRAAASGGNNHCVIFDDLNTAYSTKTAATDFLAGLIKVHQTTGLTAATAIAAQKSTNKILKDIDANWPKVQQAYTTAAGRSPTTEQEYKDLLKDESSRQKLRAAAQTVNNWKPADKPANMDDYLKQVFKIDANVNSAYVTAMKEISMDVPTKDGETQKKELFEMSEEDLEAALAVEIRRLSSENAKLTTEVKQLRRNQGKQATEDTCNKMKGETACNNKPFCTYNATETDENKKCKFNETKASKSGVSVAQAQTGGTQTTTDKCKDKKKDDCKSPDCKWEGETCKDSSFILNKQFALSVVSAAFAALLF</sequence>
<comment type="function">
    <text>VSG forms a coat on the surface of the parasite. The trypanosome evades the immune response of the host by expressing a series of antigenically distinct VSGs from an estimated 1000 VSG genes.</text>
</comment>
<comment type="subcellular location">
    <subcellularLocation>
        <location>Cell membrane</location>
        <topology>Lipid-anchor</topology>
        <topology>GPI-anchor</topology>
    </subcellularLocation>
    <text evidence="1">A soluble form is released from ruptured cells by the action of a PI-PLC.</text>
</comment>
<feature type="signal peptide">
    <location>
        <begin position="1"/>
        <end position="29"/>
    </location>
</feature>
<feature type="chain" id="PRO_0000036427" description="Variant surface glycoprotein ILTAT 1.3">
    <location>
        <begin position="30"/>
        <end position="480"/>
    </location>
</feature>
<feature type="propeptide" id="PRO_0000036428" description="Removed in mature form" evidence="1">
    <location>
        <begin position="481"/>
        <end position="503"/>
    </location>
</feature>
<feature type="lipid moiety-binding region" description="GPI-anchor amidated aspartate" evidence="1">
    <location>
        <position position="480"/>
    </location>
</feature>
<feature type="glycosylation site" description="N-linked (GlcNAc...) asparagine" evidence="2">
    <location>
        <position position="419"/>
    </location>
</feature>
<feature type="glycosylation site" description="N-linked (GlcNAc...) asparagine" evidence="2">
    <location>
        <position position="432"/>
    </location>
</feature>
<feature type="disulfide bond" evidence="1">
    <location>
        <begin position="42"/>
        <end position="168"/>
    </location>
</feature>
<feature type="disulfide bond" evidence="1">
    <location>
        <begin position="150"/>
        <end position="206"/>
    </location>
</feature>
<accession>P06014</accession>
<name>VSI6_TRYBB</name>